<dbReference type="EMBL" id="BA000003">
    <property type="protein sequence ID" value="BAB12939.1"/>
    <property type="molecule type" value="Genomic_DNA"/>
</dbReference>
<dbReference type="RefSeq" id="WP_044006102.1">
    <property type="nucleotide sequence ID" value="NC_002528.1"/>
</dbReference>
<dbReference type="SMR" id="P57318"/>
<dbReference type="STRING" id="563178.BUAP5A_219"/>
<dbReference type="EnsemblBacteria" id="BAB12939">
    <property type="protein sequence ID" value="BAB12939"/>
    <property type="gene ID" value="BAB12939"/>
</dbReference>
<dbReference type="KEGG" id="buc:BU223"/>
<dbReference type="eggNOG" id="COG3116">
    <property type="taxonomic scope" value="Bacteria"/>
</dbReference>
<dbReference type="HOGENOM" id="CLU_156524_2_1_6"/>
<dbReference type="Proteomes" id="UP000001806">
    <property type="component" value="Chromosome"/>
</dbReference>
<dbReference type="GO" id="GO:0005886">
    <property type="term" value="C:plasma membrane"/>
    <property type="evidence" value="ECO:0007669"/>
    <property type="project" value="UniProtKB-SubCell"/>
</dbReference>
<dbReference type="GO" id="GO:0051301">
    <property type="term" value="P:cell division"/>
    <property type="evidence" value="ECO:0007669"/>
    <property type="project" value="UniProtKB-KW"/>
</dbReference>
<dbReference type="InterPro" id="IPR011922">
    <property type="entry name" value="Cell_div_FtsL"/>
</dbReference>
<dbReference type="Pfam" id="PF04999">
    <property type="entry name" value="FtsL"/>
    <property type="match status" value="1"/>
</dbReference>
<reference key="1">
    <citation type="journal article" date="2000" name="Nature">
        <title>Genome sequence of the endocellular bacterial symbiont of aphids Buchnera sp. APS.</title>
        <authorList>
            <person name="Shigenobu S."/>
            <person name="Watanabe H."/>
            <person name="Hattori M."/>
            <person name="Sakaki Y."/>
            <person name="Ishikawa H."/>
        </authorList>
    </citation>
    <scope>NUCLEOTIDE SEQUENCE [LARGE SCALE GENOMIC DNA]</scope>
    <source>
        <strain>APS</strain>
    </source>
</reference>
<proteinExistence type="inferred from homology"/>
<gene>
    <name type="primary">ftsL</name>
    <name type="ordered locus">BU223</name>
</gene>
<evidence type="ECO:0000250" key="1"/>
<evidence type="ECO:0000255" key="2"/>
<evidence type="ECO:0000305" key="3"/>
<organism>
    <name type="scientific">Buchnera aphidicola subsp. Acyrthosiphon pisum (strain APS)</name>
    <name type="common">Acyrthosiphon pisum symbiotic bacterium</name>
    <dbReference type="NCBI Taxonomy" id="107806"/>
    <lineage>
        <taxon>Bacteria</taxon>
        <taxon>Pseudomonadati</taxon>
        <taxon>Pseudomonadota</taxon>
        <taxon>Gammaproteobacteria</taxon>
        <taxon>Enterobacterales</taxon>
        <taxon>Erwiniaceae</taxon>
        <taxon>Buchnera</taxon>
    </lineage>
</organism>
<feature type="chain" id="PRO_0000087368" description="Cell division protein FtsL">
    <location>
        <begin position="1"/>
        <end position="67"/>
    </location>
</feature>
<feature type="topological domain" description="Cytoplasmic" evidence="2">
    <location>
        <begin position="1"/>
        <end position="21"/>
    </location>
</feature>
<feature type="transmembrane region" description="Helical" evidence="2">
    <location>
        <begin position="22"/>
        <end position="42"/>
    </location>
</feature>
<feature type="topological domain" description="Extracellular" evidence="2">
    <location>
        <begin position="43"/>
        <end position="67"/>
    </location>
</feature>
<keyword id="KW-0131">Cell cycle</keyword>
<keyword id="KW-0132">Cell division</keyword>
<keyword id="KW-1003">Cell membrane</keyword>
<keyword id="KW-0472">Membrane</keyword>
<keyword id="KW-1185">Reference proteome</keyword>
<keyword id="KW-0812">Transmembrane</keyword>
<keyword id="KW-1133">Transmembrane helix</keyword>
<comment type="function">
    <text evidence="1">Essential cell division protein.</text>
</comment>
<comment type="subcellular location">
    <subcellularLocation>
        <location evidence="1">Cell membrane</location>
        <topology evidence="1">Single-pass type II membrane protein</topology>
    </subcellularLocation>
    <text evidence="1">Localizes to the division septum where it forms a ring structure.</text>
</comment>
<comment type="similarity">
    <text evidence="3">Belongs to the FtsL family.</text>
</comment>
<accession>P57318</accession>
<name>FTSL_BUCAI</name>
<protein>
    <recommendedName>
        <fullName>Cell division protein FtsL</fullName>
    </recommendedName>
</protein>
<sequence length="67" mass="7831">MKIQRYDLPKIIKNDFLLYGKIHLTLLIAIILSASLVIITVYNTRLLITEEEDVIQKKKKKMMNGEI</sequence>